<name>IRE1_YEAST</name>
<dbReference type="EC" id="2.7.11.1" evidence="8 10 17"/>
<dbReference type="EC" id="3.1.26.-" evidence="8 12"/>
<dbReference type="EMBL" id="Z11701">
    <property type="protein sequence ID" value="CAA77763.1"/>
    <property type="molecule type" value="Genomic_DNA"/>
</dbReference>
<dbReference type="EMBL" id="L19640">
    <property type="protein sequence ID" value="AAA34489.1"/>
    <property type="molecule type" value="Genomic_DNA"/>
</dbReference>
<dbReference type="EMBL" id="U10556">
    <property type="protein sequence ID" value="AAB68894.1"/>
    <property type="status" value="ALT_INIT"/>
    <property type="molecule type" value="Genomic_DNA"/>
</dbReference>
<dbReference type="EMBL" id="BK006934">
    <property type="protein sequence ID" value="DAA06773.1"/>
    <property type="molecule type" value="Genomic_DNA"/>
</dbReference>
<dbReference type="PIR" id="A47541">
    <property type="entry name" value="A47541"/>
</dbReference>
<dbReference type="RefSeq" id="NP_011946.1">
    <property type="nucleotide sequence ID" value="NM_001179209.1"/>
</dbReference>
<dbReference type="PDB" id="2BE1">
    <property type="method" value="X-ray"/>
    <property type="resolution" value="2.98 A"/>
    <property type="chains" value="A/B=111-449"/>
</dbReference>
<dbReference type="PDB" id="2RIO">
    <property type="method" value="X-ray"/>
    <property type="resolution" value="2.40 A"/>
    <property type="chains" value="A/B=658-1115"/>
</dbReference>
<dbReference type="PDB" id="3FBV">
    <property type="method" value="X-ray"/>
    <property type="resolution" value="3.20 A"/>
    <property type="chains" value="A/B/C/D/E/F/G/H/I/J/K/L/M/N=641-1115"/>
</dbReference>
<dbReference type="PDB" id="3LJ0">
    <property type="method" value="X-ray"/>
    <property type="resolution" value="3.20 A"/>
    <property type="chains" value="A/B=658-1115"/>
</dbReference>
<dbReference type="PDB" id="3LJ1">
    <property type="method" value="X-ray"/>
    <property type="resolution" value="3.33 A"/>
    <property type="chains" value="A/B=658-1115"/>
</dbReference>
<dbReference type="PDB" id="3LJ2">
    <property type="method" value="X-ray"/>
    <property type="resolution" value="3.33 A"/>
    <property type="chains" value="A/B=658-1115"/>
</dbReference>
<dbReference type="PDB" id="3SDJ">
    <property type="method" value="X-ray"/>
    <property type="resolution" value="3.65 A"/>
    <property type="chains" value="A/B/C/D/E/F/G/H/I/J/K/L/M/N=641-1115"/>
</dbReference>
<dbReference type="PDB" id="3SDM">
    <property type="method" value="X-ray"/>
    <property type="resolution" value="6.60 A"/>
    <property type="chains" value="A/B/C/D/E/F/G=641-1115"/>
</dbReference>
<dbReference type="PDBsum" id="2BE1"/>
<dbReference type="PDBsum" id="2RIO"/>
<dbReference type="PDBsum" id="3FBV"/>
<dbReference type="PDBsum" id="3LJ0"/>
<dbReference type="PDBsum" id="3LJ1"/>
<dbReference type="PDBsum" id="3LJ2"/>
<dbReference type="PDBsum" id="3SDJ"/>
<dbReference type="PDBsum" id="3SDM"/>
<dbReference type="SMR" id="P32361"/>
<dbReference type="BioGRID" id="36513">
    <property type="interactions" value="548"/>
</dbReference>
<dbReference type="ComplexPortal" id="CPX-2147">
    <property type="entry name" value="Ire1 serine/threonine-protein kinase/endoribonuclease complex"/>
</dbReference>
<dbReference type="DIP" id="DIP-233N"/>
<dbReference type="FunCoup" id="P32361">
    <property type="interactions" value="203"/>
</dbReference>
<dbReference type="IntAct" id="P32361">
    <property type="interactions" value="59"/>
</dbReference>
<dbReference type="MINT" id="P32361"/>
<dbReference type="STRING" id="4932.YHR079C"/>
<dbReference type="GlyCosmos" id="P32361">
    <property type="glycosylation" value="4 sites, No reported glycans"/>
</dbReference>
<dbReference type="GlyGen" id="P32361">
    <property type="glycosylation" value="4 sites"/>
</dbReference>
<dbReference type="iPTMnet" id="P32361"/>
<dbReference type="PaxDb" id="4932-YHR079C"/>
<dbReference type="PeptideAtlas" id="P32361"/>
<dbReference type="EnsemblFungi" id="YHR079C_mRNA">
    <property type="protein sequence ID" value="YHR079C"/>
    <property type="gene ID" value="YHR079C"/>
</dbReference>
<dbReference type="GeneID" id="856478"/>
<dbReference type="KEGG" id="sce:YHR079C"/>
<dbReference type="AGR" id="SGD:S000001121"/>
<dbReference type="SGD" id="S000001121">
    <property type="gene designation" value="IRE1"/>
</dbReference>
<dbReference type="VEuPathDB" id="FungiDB:YHR079C"/>
<dbReference type="eggNOG" id="KOG1027">
    <property type="taxonomic scope" value="Eukaryota"/>
</dbReference>
<dbReference type="GeneTree" id="ENSGT00940000167966"/>
<dbReference type="HOGENOM" id="CLU_004875_2_1_1"/>
<dbReference type="InParanoid" id="P32361"/>
<dbReference type="OMA" id="IRYYCSE"/>
<dbReference type="OrthoDB" id="63989at2759"/>
<dbReference type="BioCyc" id="YEAST:G3O-31126-MONOMER"/>
<dbReference type="BRENDA" id="2.7.11.1">
    <property type="organism ID" value="984"/>
</dbReference>
<dbReference type="Reactome" id="R-SCE-381070">
    <property type="pathway name" value="IRE1alpha activates chaperones"/>
</dbReference>
<dbReference type="BioGRID-ORCS" id="856478">
    <property type="hits" value="0 hits in 13 CRISPR screens"/>
</dbReference>
<dbReference type="EvolutionaryTrace" id="P32361"/>
<dbReference type="PRO" id="PR:P32361"/>
<dbReference type="Proteomes" id="UP000002311">
    <property type="component" value="Chromosome VIII"/>
</dbReference>
<dbReference type="RNAct" id="P32361">
    <property type="molecule type" value="protein"/>
</dbReference>
<dbReference type="GO" id="GO:0005783">
    <property type="term" value="C:endoplasmic reticulum"/>
    <property type="evidence" value="ECO:0007005"/>
    <property type="project" value="SGD"/>
</dbReference>
<dbReference type="GO" id="GO:0005789">
    <property type="term" value="C:endoplasmic reticulum membrane"/>
    <property type="evidence" value="ECO:0000314"/>
    <property type="project" value="SGD"/>
</dbReference>
<dbReference type="GO" id="GO:1990332">
    <property type="term" value="C:Ire1 complex"/>
    <property type="evidence" value="ECO:0000353"/>
    <property type="project" value="ComplexPortal"/>
</dbReference>
<dbReference type="GO" id="GO:1990604">
    <property type="term" value="C:IRE1-TRAF2-ASK1 complex"/>
    <property type="evidence" value="ECO:0000318"/>
    <property type="project" value="GO_Central"/>
</dbReference>
<dbReference type="GO" id="GO:0005634">
    <property type="term" value="C:nucleus"/>
    <property type="evidence" value="ECO:0000314"/>
    <property type="project" value="SGD"/>
</dbReference>
<dbReference type="GO" id="GO:0005524">
    <property type="term" value="F:ATP binding"/>
    <property type="evidence" value="ECO:0007669"/>
    <property type="project" value="UniProtKB-KW"/>
</dbReference>
<dbReference type="GO" id="GO:0042802">
    <property type="term" value="F:identical protein binding"/>
    <property type="evidence" value="ECO:0000353"/>
    <property type="project" value="IntAct"/>
</dbReference>
<dbReference type="GO" id="GO:0046872">
    <property type="term" value="F:metal ion binding"/>
    <property type="evidence" value="ECO:0007669"/>
    <property type="project" value="UniProtKB-KW"/>
</dbReference>
<dbReference type="GO" id="GO:0004672">
    <property type="term" value="F:protein kinase activity"/>
    <property type="evidence" value="ECO:0007005"/>
    <property type="project" value="SGD"/>
</dbReference>
<dbReference type="GO" id="GO:0106310">
    <property type="term" value="F:protein serine kinase activity"/>
    <property type="evidence" value="ECO:0007669"/>
    <property type="project" value="RHEA"/>
</dbReference>
<dbReference type="GO" id="GO:0004674">
    <property type="term" value="F:protein serine/threonine kinase activity"/>
    <property type="evidence" value="ECO:0000314"/>
    <property type="project" value="SGD"/>
</dbReference>
<dbReference type="GO" id="GO:0004521">
    <property type="term" value="F:RNA endonuclease activity"/>
    <property type="evidence" value="ECO:0000314"/>
    <property type="project" value="SGD"/>
</dbReference>
<dbReference type="GO" id="GO:0051082">
    <property type="term" value="F:unfolded protein binding"/>
    <property type="evidence" value="ECO:0000314"/>
    <property type="project" value="SGD"/>
</dbReference>
<dbReference type="GO" id="GO:0030968">
    <property type="term" value="P:endoplasmic reticulum unfolded protein response"/>
    <property type="evidence" value="ECO:0000315"/>
    <property type="project" value="SGD"/>
</dbReference>
<dbReference type="GO" id="GO:0031505">
    <property type="term" value="P:fungal-type cell wall organization"/>
    <property type="evidence" value="ECO:0000315"/>
    <property type="project" value="SGD"/>
</dbReference>
<dbReference type="GO" id="GO:0006020">
    <property type="term" value="P:inositol metabolic process"/>
    <property type="evidence" value="ECO:0000315"/>
    <property type="project" value="SGD"/>
</dbReference>
<dbReference type="GO" id="GO:0070059">
    <property type="term" value="P:intrinsic apoptotic signaling pathway in response to endoplasmic reticulum stress"/>
    <property type="evidence" value="ECO:0000318"/>
    <property type="project" value="GO_Central"/>
</dbReference>
<dbReference type="GO" id="GO:0036498">
    <property type="term" value="P:IRE1-mediated unfolded protein response"/>
    <property type="evidence" value="ECO:0000314"/>
    <property type="project" value="ComplexPortal"/>
</dbReference>
<dbReference type="GO" id="GO:0006397">
    <property type="term" value="P:mRNA processing"/>
    <property type="evidence" value="ECO:0007669"/>
    <property type="project" value="InterPro"/>
</dbReference>
<dbReference type="GO" id="GO:0034067">
    <property type="term" value="P:protein localization to Golgi apparatus"/>
    <property type="evidence" value="ECO:0000315"/>
    <property type="project" value="SGD"/>
</dbReference>
<dbReference type="GO" id="GO:0034976">
    <property type="term" value="P:response to endoplasmic reticulum stress"/>
    <property type="evidence" value="ECO:0000315"/>
    <property type="project" value="SGD"/>
</dbReference>
<dbReference type="CDD" id="cd09769">
    <property type="entry name" value="Luminal_IRE1"/>
    <property type="match status" value="1"/>
</dbReference>
<dbReference type="CDD" id="cd10422">
    <property type="entry name" value="RNase_Ire1"/>
    <property type="match status" value="1"/>
</dbReference>
<dbReference type="CDD" id="cd13982">
    <property type="entry name" value="STKc_IRE1"/>
    <property type="match status" value="1"/>
</dbReference>
<dbReference type="FunFam" id="1.10.510.10:FF:000572">
    <property type="entry name" value="Serine/threonine-protein kinase/endoribonuclease IRE1"/>
    <property type="match status" value="1"/>
</dbReference>
<dbReference type="FunFam" id="1.20.1440.180:FF:000002">
    <property type="entry name" value="Serine/threonine-protein kinase/endoribonuclease IRE1"/>
    <property type="match status" value="1"/>
</dbReference>
<dbReference type="FunFam" id="3.30.200.20:FF:000443">
    <property type="entry name" value="Serine/threonine-protein kinase/endoribonuclease IRE1"/>
    <property type="match status" value="1"/>
</dbReference>
<dbReference type="Gene3D" id="1.20.1440.180">
    <property type="entry name" value="KEN domain"/>
    <property type="match status" value="1"/>
</dbReference>
<dbReference type="Gene3D" id="3.30.200.20">
    <property type="entry name" value="Phosphorylase Kinase, domain 1"/>
    <property type="match status" value="1"/>
</dbReference>
<dbReference type="Gene3D" id="1.10.510.10">
    <property type="entry name" value="Transferase(Phosphotransferase) domain 1"/>
    <property type="match status" value="1"/>
</dbReference>
<dbReference type="Gene3D" id="2.130.10.10">
    <property type="entry name" value="YVTN repeat-like/Quinoprotein amine dehydrogenase"/>
    <property type="match status" value="1"/>
</dbReference>
<dbReference type="InterPro" id="IPR045133">
    <property type="entry name" value="IRE1/2-like"/>
</dbReference>
<dbReference type="InterPro" id="IPR010513">
    <property type="entry name" value="KEN_dom"/>
</dbReference>
<dbReference type="InterPro" id="IPR038357">
    <property type="entry name" value="KEN_sf"/>
</dbReference>
<dbReference type="InterPro" id="IPR011009">
    <property type="entry name" value="Kinase-like_dom_sf"/>
</dbReference>
<dbReference type="InterPro" id="IPR018391">
    <property type="entry name" value="PQQ_b-propeller_rpt"/>
</dbReference>
<dbReference type="InterPro" id="IPR000719">
    <property type="entry name" value="Prot_kinase_dom"/>
</dbReference>
<dbReference type="InterPro" id="IPR011047">
    <property type="entry name" value="Quinoprotein_ADH-like_sf"/>
</dbReference>
<dbReference type="InterPro" id="IPR008271">
    <property type="entry name" value="Ser/Thr_kinase_AS"/>
</dbReference>
<dbReference type="InterPro" id="IPR015943">
    <property type="entry name" value="WD40/YVTN_repeat-like_dom_sf"/>
</dbReference>
<dbReference type="PANTHER" id="PTHR13954">
    <property type="entry name" value="IRE1-RELATED"/>
    <property type="match status" value="1"/>
</dbReference>
<dbReference type="PANTHER" id="PTHR13954:SF6">
    <property type="entry name" value="NON-SPECIFIC SERINE_THREONINE PROTEIN KINASE"/>
    <property type="match status" value="1"/>
</dbReference>
<dbReference type="Pfam" id="PF00069">
    <property type="entry name" value="Pkinase"/>
    <property type="match status" value="1"/>
</dbReference>
<dbReference type="Pfam" id="PF06479">
    <property type="entry name" value="Ribonuc_2-5A"/>
    <property type="match status" value="1"/>
</dbReference>
<dbReference type="SMART" id="SM00564">
    <property type="entry name" value="PQQ"/>
    <property type="match status" value="3"/>
</dbReference>
<dbReference type="SMART" id="SM00580">
    <property type="entry name" value="PUG"/>
    <property type="match status" value="1"/>
</dbReference>
<dbReference type="SMART" id="SM00220">
    <property type="entry name" value="S_TKc"/>
    <property type="match status" value="1"/>
</dbReference>
<dbReference type="SUPFAM" id="SSF56112">
    <property type="entry name" value="Protein kinase-like (PK-like)"/>
    <property type="match status" value="1"/>
</dbReference>
<dbReference type="SUPFAM" id="SSF50998">
    <property type="entry name" value="Quinoprotein alcohol dehydrogenase-like"/>
    <property type="match status" value="1"/>
</dbReference>
<dbReference type="PROSITE" id="PS51392">
    <property type="entry name" value="KEN"/>
    <property type="match status" value="1"/>
</dbReference>
<dbReference type="PROSITE" id="PS50011">
    <property type="entry name" value="PROTEIN_KINASE_DOM"/>
    <property type="match status" value="1"/>
</dbReference>
<dbReference type="PROSITE" id="PS00108">
    <property type="entry name" value="PROTEIN_KINASE_ST"/>
    <property type="match status" value="1"/>
</dbReference>
<organism>
    <name type="scientific">Saccharomyces cerevisiae (strain ATCC 204508 / S288c)</name>
    <name type="common">Baker's yeast</name>
    <dbReference type="NCBI Taxonomy" id="559292"/>
    <lineage>
        <taxon>Eukaryota</taxon>
        <taxon>Fungi</taxon>
        <taxon>Dikarya</taxon>
        <taxon>Ascomycota</taxon>
        <taxon>Saccharomycotina</taxon>
        <taxon>Saccharomycetes</taxon>
        <taxon>Saccharomycetales</taxon>
        <taxon>Saccharomycetaceae</taxon>
        <taxon>Saccharomyces</taxon>
    </lineage>
</organism>
<evidence type="ECO:0000255" key="1"/>
<evidence type="ECO:0000255" key="2">
    <source>
        <dbReference type="PROSITE-ProRule" id="PRU00159"/>
    </source>
</evidence>
<evidence type="ECO:0000255" key="3">
    <source>
        <dbReference type="PROSITE-ProRule" id="PRU00725"/>
    </source>
</evidence>
<evidence type="ECO:0000255" key="4">
    <source>
        <dbReference type="PROSITE-ProRule" id="PRU10027"/>
    </source>
</evidence>
<evidence type="ECO:0000256" key="5">
    <source>
        <dbReference type="SAM" id="MobiDB-lite"/>
    </source>
</evidence>
<evidence type="ECO:0000269" key="6">
    <source>
    </source>
</evidence>
<evidence type="ECO:0000269" key="7">
    <source>
    </source>
</evidence>
<evidence type="ECO:0000269" key="8">
    <source>
    </source>
</evidence>
<evidence type="ECO:0000269" key="9">
    <source>
    </source>
</evidence>
<evidence type="ECO:0000269" key="10">
    <source>
    </source>
</evidence>
<evidence type="ECO:0000269" key="11">
    <source>
    </source>
</evidence>
<evidence type="ECO:0000269" key="12">
    <source>
    </source>
</evidence>
<evidence type="ECO:0000269" key="13">
    <source>
    </source>
</evidence>
<evidence type="ECO:0000305" key="14"/>
<evidence type="ECO:0000305" key="15">
    <source>
    </source>
</evidence>
<evidence type="ECO:0000305" key="16">
    <source>
    </source>
</evidence>
<evidence type="ECO:0000305" key="17">
    <source>
    </source>
</evidence>
<evidence type="ECO:0007744" key="18">
    <source>
        <dbReference type="PDB" id="2BE1"/>
    </source>
</evidence>
<evidence type="ECO:0007744" key="19">
    <source>
        <dbReference type="PDB" id="2RIO"/>
    </source>
</evidence>
<evidence type="ECO:0007829" key="20">
    <source>
        <dbReference type="PDB" id="2BE1"/>
    </source>
</evidence>
<evidence type="ECO:0007829" key="21">
    <source>
        <dbReference type="PDB" id="2RIO"/>
    </source>
</evidence>
<evidence type="ECO:0007829" key="22">
    <source>
        <dbReference type="PDB" id="3FBV"/>
    </source>
</evidence>
<evidence type="ECO:0007829" key="23">
    <source>
        <dbReference type="PDB" id="3LJ2"/>
    </source>
</evidence>
<accession>P32361</accession>
<accession>D3DL29</accession>
<keyword id="KW-0002">3D-structure</keyword>
<keyword id="KW-0067">ATP-binding</keyword>
<keyword id="KW-0256">Endoplasmic reticulum</keyword>
<keyword id="KW-0325">Glycoprotein</keyword>
<keyword id="KW-0378">Hydrolase</keyword>
<keyword id="KW-0418">Kinase</keyword>
<keyword id="KW-0460">Magnesium</keyword>
<keyword id="KW-0472">Membrane</keyword>
<keyword id="KW-0479">Metal-binding</keyword>
<keyword id="KW-0511">Multifunctional enzyme</keyword>
<keyword id="KW-0547">Nucleotide-binding</keyword>
<keyword id="KW-0597">Phosphoprotein</keyword>
<keyword id="KW-1185">Reference proteome</keyword>
<keyword id="KW-0723">Serine/threonine-protein kinase</keyword>
<keyword id="KW-0732">Signal</keyword>
<keyword id="KW-0804">Transcription</keyword>
<keyword id="KW-0805">Transcription regulation</keyword>
<keyword id="KW-0808">Transferase</keyword>
<keyword id="KW-0812">Transmembrane</keyword>
<keyword id="KW-1133">Transmembrane helix</keyword>
<keyword id="KW-0834">Unfolded protein response</keyword>
<comment type="function">
    <text evidence="8 10 11 12 13">Senses unfolded proteins in the lumen of the endoplasmic reticulum via its N-terminal domain which leads to enzyme auto-activation (PubMed:8663458, PubMed:8670804, PubMed:9528768). The active endoribonuclease domain splices HAC1 precursor mRNA to produce the mature form which then induces transcription of UPR target genes (PubMed:18191223, PubMed:9323131).</text>
</comment>
<comment type="catalytic activity">
    <reaction evidence="8 15 17">
        <text>L-seryl-[protein] + ATP = O-phospho-L-seryl-[protein] + ADP + H(+)</text>
        <dbReference type="Rhea" id="RHEA:17989"/>
        <dbReference type="Rhea" id="RHEA-COMP:9863"/>
        <dbReference type="Rhea" id="RHEA-COMP:11604"/>
        <dbReference type="ChEBI" id="CHEBI:15378"/>
        <dbReference type="ChEBI" id="CHEBI:29999"/>
        <dbReference type="ChEBI" id="CHEBI:30616"/>
        <dbReference type="ChEBI" id="CHEBI:83421"/>
        <dbReference type="ChEBI" id="CHEBI:456216"/>
        <dbReference type="EC" id="2.7.11.1"/>
    </reaction>
    <physiologicalReaction direction="left-to-right" evidence="8 15 17">
        <dbReference type="Rhea" id="RHEA:17990"/>
    </physiologicalReaction>
</comment>
<comment type="catalytic activity">
    <reaction evidence="8 15 17">
        <text>L-threonyl-[protein] + ATP = O-phospho-L-threonyl-[protein] + ADP + H(+)</text>
        <dbReference type="Rhea" id="RHEA:46608"/>
        <dbReference type="Rhea" id="RHEA-COMP:11060"/>
        <dbReference type="Rhea" id="RHEA-COMP:11605"/>
        <dbReference type="ChEBI" id="CHEBI:15378"/>
        <dbReference type="ChEBI" id="CHEBI:30013"/>
        <dbReference type="ChEBI" id="CHEBI:30616"/>
        <dbReference type="ChEBI" id="CHEBI:61977"/>
        <dbReference type="ChEBI" id="CHEBI:456216"/>
        <dbReference type="EC" id="2.7.11.1"/>
    </reaction>
    <physiologicalReaction direction="left-to-right" evidence="8 15 17">
        <dbReference type="Rhea" id="RHEA:46609"/>
    </physiologicalReaction>
</comment>
<comment type="cofactor">
    <cofactor evidence="8">
        <name>Mg(2+)</name>
        <dbReference type="ChEBI" id="CHEBI:18420"/>
    </cofactor>
</comment>
<comment type="activity regulation">
    <text evidence="10 13">The kinase domain is activated by trans-autophosphorylation. Kinase activity is required for activation of the endoribonuclease domain (PubMed:8663458). Inactivated by dephosphorylation via recruitment of PTC2 (PubMed:9528768).</text>
</comment>
<comment type="subunit">
    <text evidence="7 8 10 13">Homodimer; in response to the accumulation of unfolded proteins (PubMed:16365312, PubMed:18191223, PubMed:8663458). Dimerization of lumenal domains help position the cytoplasmic kinase domains optimally for autophosphorylation to initiate the unfolded protein response (PubMed:16365312). Dimerization of the kinase domain is important for ribonuclease activity (PubMed:18191223). Interacts (when phosphorylated) with PTC2; the interaction is direct and serves to attenuate the endoplasmic reticulum unfolded protein response (PubMed:9528768).</text>
</comment>
<comment type="interaction">
    <interactant intactId="EBI-9364">
        <id>P32361</id>
    </interactant>
    <interactant intactId="EBI-3669144">
        <id>Q05924</id>
        <label>DCR2</label>
    </interactant>
    <organismsDiffer>false</organismsDiffer>
    <experiments>2</experiments>
</comment>
<comment type="interaction">
    <interactant intactId="EBI-9364">
        <id>P32361</id>
    </interactant>
    <interactant intactId="EBI-9364">
        <id>P32361</id>
        <label>IRE1</label>
    </interactant>
    <organismsDiffer>false</organismsDiffer>
    <experiments>5</experiments>
</comment>
<comment type="subcellular location">
    <subcellularLocation>
        <location evidence="9">Endoplasmic reticulum membrane</location>
        <topology evidence="9">Single-pass type I membrane protein</topology>
    </subcellularLocation>
</comment>
<comment type="PTM">
    <text evidence="8 11">Autophosphorylated mainly on serine residues; phosphorylation enables nucleotide binding by the active site.</text>
</comment>
<comment type="miscellaneous">
    <text evidence="6">Present with 259 molecules/cell in log phase SD medium.</text>
</comment>
<comment type="similarity">
    <text evidence="2">Belongs to the protein kinase superfamily. Ser/Thr protein kinase family.</text>
</comment>
<comment type="sequence caution" evidence="14">
    <conflict type="erroneous initiation">
        <sequence resource="EMBL-CDS" id="AAB68894"/>
    </conflict>
</comment>
<feature type="signal peptide" evidence="1">
    <location>
        <begin position="1"/>
        <end position="18"/>
    </location>
</feature>
<feature type="chain" id="PRO_0000024338" description="Serine/threonine-protein kinase/endoribonuclease IRE1">
    <location>
        <begin position="19"/>
        <end position="1115"/>
    </location>
</feature>
<feature type="topological domain" description="Lumenal" evidence="9">
    <location>
        <begin position="19"/>
        <end position="526"/>
    </location>
</feature>
<feature type="transmembrane region" description="Helical" evidence="1">
    <location>
        <begin position="527"/>
        <end position="555"/>
    </location>
</feature>
<feature type="topological domain" description="Cytoplasmic" evidence="9">
    <location>
        <begin position="556"/>
        <end position="1115"/>
    </location>
</feature>
<feature type="domain" description="Protein kinase" evidence="2">
    <location>
        <begin position="674"/>
        <end position="980"/>
    </location>
</feature>
<feature type="domain" description="KEN" evidence="3">
    <location>
        <begin position="983"/>
        <end position="1115"/>
    </location>
</feature>
<feature type="region of interest" description="Disordered" evidence="5">
    <location>
        <begin position="617"/>
        <end position="658"/>
    </location>
</feature>
<feature type="compositionally biased region" description="Acidic residues" evidence="5">
    <location>
        <begin position="624"/>
        <end position="634"/>
    </location>
</feature>
<feature type="compositionally biased region" description="Basic residues" evidence="5">
    <location>
        <begin position="642"/>
        <end position="658"/>
    </location>
</feature>
<feature type="active site" description="Proton acceptor" evidence="2 4">
    <location>
        <position position="797"/>
    </location>
</feature>
<feature type="binding site" evidence="8 19">
    <location>
        <position position="684"/>
    </location>
    <ligand>
        <name>ADP</name>
        <dbReference type="ChEBI" id="CHEBI:456216"/>
    </ligand>
</feature>
<feature type="binding site" evidence="8 19">
    <location>
        <position position="702"/>
    </location>
    <ligand>
        <name>ADP</name>
        <dbReference type="ChEBI" id="CHEBI:456216"/>
    </ligand>
</feature>
<feature type="binding site" evidence="8 19">
    <location>
        <position position="746"/>
    </location>
    <ligand>
        <name>ADP</name>
        <dbReference type="ChEBI" id="CHEBI:456216"/>
    </ligand>
</feature>
<feature type="binding site" evidence="8 19">
    <location>
        <position position="748"/>
    </location>
    <ligand>
        <name>ADP</name>
        <dbReference type="ChEBI" id="CHEBI:456216"/>
    </ligand>
</feature>
<feature type="binding site" evidence="8 19">
    <location>
        <position position="751"/>
    </location>
    <ligand>
        <name>ADP</name>
        <dbReference type="ChEBI" id="CHEBI:456216"/>
    </ligand>
</feature>
<feature type="binding site" evidence="8 19">
    <location>
        <position position="802"/>
    </location>
    <ligand>
        <name>Mg(2+)</name>
        <dbReference type="ChEBI" id="CHEBI:18420"/>
    </ligand>
</feature>
<feature type="binding site" evidence="8 19">
    <location>
        <position position="828"/>
    </location>
    <ligand>
        <name>Mg(2+)</name>
        <dbReference type="ChEBI" id="CHEBI:18420"/>
    </ligand>
</feature>
<feature type="modified residue" description="Phosphoserine; by autocatalysis" evidence="8 16">
    <location>
        <position position="840"/>
    </location>
</feature>
<feature type="modified residue" description="Phosphoserine; by autocatalysis" evidence="8 16">
    <location>
        <position position="841"/>
    </location>
</feature>
<feature type="modified residue" description="Phosphothreonine; by autocatalysis" evidence="8">
    <location>
        <position position="844"/>
    </location>
</feature>
<feature type="glycosylation site" description="N-linked (GlcNAc...) asparagine" evidence="1">
    <location>
        <position position="111"/>
    </location>
</feature>
<feature type="glycosylation site" description="N-linked (GlcNAc...) asparagine" evidence="1">
    <location>
        <position position="213"/>
    </location>
</feature>
<feature type="glycosylation site" description="N-linked (GlcNAc...) asparagine" evidence="1">
    <location>
        <position position="298"/>
    </location>
</feature>
<feature type="glycosylation site" description="N-linked (GlcNAc...) asparagine" evidence="1">
    <location>
        <position position="397"/>
    </location>
</feature>
<feature type="mutagenesis site" description="Decreases activation of the unfolded protein response." evidence="7">
    <original>T</original>
    <variation>W</variation>
    <location>
        <position position="226"/>
    </location>
</feature>
<feature type="mutagenesis site" description="Decreases activation of the unfolded protein response." evidence="7">
    <original>M</original>
    <variation>A</variation>
    <location>
        <position position="229"/>
    </location>
</feature>
<feature type="mutagenesis site" description="Decreases activation of the unfolded protein response." evidence="7">
    <original>F</original>
    <variation>A</variation>
    <location>
        <position position="247"/>
    </location>
</feature>
<feature type="mutagenesis site" description="Decreases activation of the unfolded protein response." evidence="7">
    <original>F</original>
    <variation>A</variation>
    <location>
        <position position="285"/>
    </location>
</feature>
<feature type="mutagenesis site" description="Decreases activation of the unfolded protein response." evidence="7">
    <original>Y</original>
    <variation>A</variation>
    <location>
        <position position="301"/>
    </location>
</feature>
<feature type="mutagenesis site" description="Decreases activation of the unfolded protein response." evidence="7">
    <original>W</original>
    <variation>A</variation>
    <location>
        <position position="426"/>
    </location>
</feature>
<feature type="mutagenesis site" description="Sensitive to tunicamycin (inducer of endoplasmic reticulum stress)." evidence="8">
    <original>R</original>
    <variation>D</variation>
    <location>
        <position position="697"/>
    </location>
</feature>
<feature type="mutagenesis site" description="Loss of autophosphorylation." evidence="10">
    <original>K</original>
    <variation>A</variation>
    <location>
        <position position="702"/>
    </location>
</feature>
<feature type="mutagenesis site" description="Sensitive to tunicamycin (inducer of endoplasmic reticulum stress)." evidence="8">
    <original>D</original>
    <variation>R</variation>
    <location>
        <position position="723"/>
    </location>
</feature>
<feature type="mutagenesis site" description="Sensitive to tunicamycin (inducer of endoplasmic reticulum stress)." evidence="8">
    <original>R</original>
    <variation>D</variation>
    <location>
        <position position="730"/>
    </location>
</feature>
<feature type="mutagenesis site" description="Loss of kinase activity." evidence="8">
    <original>D</original>
    <variation>A</variation>
    <location>
        <position position="797"/>
    </location>
</feature>
<feature type="mutagenesis site" description="Sensitive to tunicamycin (inducer of endoplasmic reticulum stress)." evidence="8">
    <original>S</original>
    <variation>A</variation>
    <location>
        <position position="840"/>
    </location>
</feature>
<feature type="mutagenesis site" description="Sensitive to tunicamycin (inducer of endoplasmic reticulum stress)." evidence="8">
    <original>S</original>
    <variation>A</variation>
    <location>
        <position position="841"/>
    </location>
</feature>
<feature type="mutagenesis site" description="Sensitive to tunicamycin (inducer of endoplasmic reticulum stress)." evidence="8">
    <original>T</original>
    <variation>A</variation>
    <location>
        <position position="844"/>
    </location>
</feature>
<feature type="sequence conflict" description="In Ref. 1; CAA77763." evidence="14" ref="1">
    <original>N</original>
    <variation>S</variation>
    <location>
        <position position="368"/>
    </location>
</feature>
<feature type="sequence conflict" description="In Ref. 1; CAA77763." evidence="14" ref="1">
    <original>ND</original>
    <variation>KH</variation>
    <location>
        <begin position="625"/>
        <end position="626"/>
    </location>
</feature>
<feature type="strand" evidence="20">
    <location>
        <begin position="116"/>
        <end position="127"/>
    </location>
</feature>
<feature type="strand" evidence="20">
    <location>
        <begin position="132"/>
        <end position="136"/>
    </location>
</feature>
<feature type="turn" evidence="20">
    <location>
        <begin position="137"/>
        <end position="139"/>
    </location>
</feature>
<feature type="strand" evidence="20">
    <location>
        <begin position="142"/>
        <end position="146"/>
    </location>
</feature>
<feature type="helix" evidence="20">
    <location>
        <begin position="148"/>
        <end position="150"/>
    </location>
</feature>
<feature type="strand" evidence="20">
    <location>
        <begin position="154"/>
        <end position="156"/>
    </location>
</feature>
<feature type="turn" evidence="20">
    <location>
        <begin position="162"/>
        <end position="164"/>
    </location>
</feature>
<feature type="strand" evidence="20">
    <location>
        <begin position="165"/>
        <end position="171"/>
    </location>
</feature>
<feature type="turn" evidence="20">
    <location>
        <begin position="175"/>
        <end position="177"/>
    </location>
</feature>
<feature type="strand" evidence="20">
    <location>
        <begin position="178"/>
        <end position="183"/>
    </location>
</feature>
<feature type="turn" evidence="20">
    <location>
        <begin position="184"/>
        <end position="186"/>
    </location>
</feature>
<feature type="strand" evidence="20">
    <location>
        <begin position="187"/>
        <end position="194"/>
    </location>
</feature>
<feature type="helix" evidence="20">
    <location>
        <begin position="195"/>
        <end position="199"/>
    </location>
</feature>
<feature type="strand" evidence="20">
    <location>
        <begin position="203"/>
        <end position="207"/>
    </location>
</feature>
<feature type="strand" evidence="20">
    <location>
        <begin position="222"/>
        <end position="226"/>
    </location>
</feature>
<feature type="strand" evidence="20">
    <location>
        <begin position="228"/>
        <end position="237"/>
    </location>
</feature>
<feature type="turn" evidence="20">
    <location>
        <begin position="238"/>
        <end position="240"/>
    </location>
</feature>
<feature type="strand" evidence="20">
    <location>
        <begin position="243"/>
        <end position="248"/>
    </location>
</feature>
<feature type="strand" evidence="20">
    <location>
        <begin position="277"/>
        <end position="286"/>
    </location>
</feature>
<feature type="strand" evidence="20">
    <location>
        <begin position="300"/>
        <end position="305"/>
    </location>
</feature>
<feature type="turn" evidence="20">
    <location>
        <begin position="308"/>
        <end position="310"/>
    </location>
</feature>
<feature type="helix" evidence="20">
    <location>
        <begin position="311"/>
        <end position="314"/>
    </location>
</feature>
<feature type="strand" evidence="20">
    <location>
        <begin position="321"/>
        <end position="323"/>
    </location>
</feature>
<feature type="strand" evidence="20">
    <location>
        <begin position="326"/>
        <end position="329"/>
    </location>
</feature>
<feature type="turn" evidence="20">
    <location>
        <begin position="330"/>
        <end position="332"/>
    </location>
</feature>
<feature type="strand" evidence="20">
    <location>
        <begin position="333"/>
        <end position="337"/>
    </location>
</feature>
<feature type="strand" evidence="20">
    <location>
        <begin position="344"/>
        <end position="347"/>
    </location>
</feature>
<feature type="strand" evidence="20">
    <location>
        <begin position="355"/>
        <end position="364"/>
    </location>
</feature>
<feature type="turn" evidence="20">
    <location>
        <begin position="365"/>
        <end position="368"/>
    </location>
</feature>
<feature type="strand" evidence="20">
    <location>
        <begin position="369"/>
        <end position="374"/>
    </location>
</feature>
<feature type="strand" evidence="20">
    <location>
        <begin position="390"/>
        <end position="394"/>
    </location>
</feature>
<feature type="strand" evidence="20">
    <location>
        <begin position="400"/>
        <end position="404"/>
    </location>
</feature>
<feature type="turn" evidence="20">
    <location>
        <begin position="405"/>
        <end position="407"/>
    </location>
</feature>
<feature type="helix" evidence="20">
    <location>
        <begin position="409"/>
        <end position="413"/>
    </location>
</feature>
<feature type="helix" evidence="20">
    <location>
        <begin position="419"/>
        <end position="422"/>
    </location>
</feature>
<feature type="helix" evidence="20">
    <location>
        <begin position="424"/>
        <end position="426"/>
    </location>
</feature>
<feature type="helix" evidence="20">
    <location>
        <begin position="429"/>
        <end position="433"/>
    </location>
</feature>
<feature type="helix" evidence="20">
    <location>
        <begin position="435"/>
        <end position="442"/>
    </location>
</feature>
<feature type="strand" evidence="20">
    <location>
        <begin position="444"/>
        <end position="446"/>
    </location>
</feature>
<feature type="turn" evidence="23">
    <location>
        <begin position="666"/>
        <end position="669"/>
    </location>
</feature>
<feature type="strand" evidence="21">
    <location>
        <begin position="674"/>
        <end position="682"/>
    </location>
</feature>
<feature type="turn" evidence="22">
    <location>
        <begin position="684"/>
        <end position="686"/>
    </location>
</feature>
<feature type="strand" evidence="21">
    <location>
        <begin position="688"/>
        <end position="705"/>
    </location>
</feature>
<feature type="helix" evidence="21">
    <location>
        <begin position="706"/>
        <end position="708"/>
    </location>
</feature>
<feature type="helix" evidence="21">
    <location>
        <begin position="709"/>
        <end position="722"/>
    </location>
</feature>
<feature type="strand" evidence="21">
    <location>
        <begin position="731"/>
        <end position="736"/>
    </location>
</feature>
<feature type="strand" evidence="21">
    <location>
        <begin position="738"/>
        <end position="745"/>
    </location>
</feature>
<feature type="strand" evidence="21">
    <location>
        <begin position="749"/>
        <end position="751"/>
    </location>
</feature>
<feature type="helix" evidence="21">
    <location>
        <begin position="752"/>
        <end position="757"/>
    </location>
</feature>
<feature type="helix" evidence="22">
    <location>
        <begin position="765"/>
        <end position="769"/>
    </location>
</feature>
<feature type="helix" evidence="21">
    <location>
        <begin position="774"/>
        <end position="790"/>
    </location>
</feature>
<feature type="helix" evidence="21">
    <location>
        <begin position="800"/>
        <end position="802"/>
    </location>
</feature>
<feature type="strand" evidence="21">
    <location>
        <begin position="803"/>
        <end position="806"/>
    </location>
</feature>
<feature type="helix" evidence="21">
    <location>
        <begin position="809"/>
        <end position="812"/>
    </location>
</feature>
<feature type="strand" evidence="21">
    <location>
        <begin position="823"/>
        <end position="826"/>
    </location>
</feature>
<feature type="turn" evidence="22">
    <location>
        <begin position="836"/>
        <end position="838"/>
    </location>
</feature>
<feature type="helix" evidence="22">
    <location>
        <begin position="851"/>
        <end position="855"/>
    </location>
</feature>
<feature type="helix" evidence="21">
    <location>
        <begin position="858"/>
        <end position="861"/>
    </location>
</feature>
<feature type="helix" evidence="21">
    <location>
        <begin position="900"/>
        <end position="914"/>
    </location>
</feature>
<feature type="turn" evidence="21">
    <location>
        <begin position="924"/>
        <end position="926"/>
    </location>
</feature>
<feature type="helix" evidence="21">
    <location>
        <begin position="927"/>
        <end position="933"/>
    </location>
</feature>
<feature type="helix" evidence="21">
    <location>
        <begin position="947"/>
        <end position="960"/>
    </location>
</feature>
<feature type="helix" evidence="21">
    <location>
        <begin position="965"/>
        <end position="967"/>
    </location>
</feature>
<feature type="helix" evidence="21">
    <location>
        <begin position="971"/>
        <end position="975"/>
    </location>
</feature>
<feature type="helix" evidence="21">
    <location>
        <begin position="978"/>
        <end position="980"/>
    </location>
</feature>
<feature type="helix" evidence="21">
    <location>
        <begin position="983"/>
        <end position="998"/>
    </location>
</feature>
<feature type="turn" evidence="21">
    <location>
        <begin position="1002"/>
        <end position="1005"/>
    </location>
</feature>
<feature type="helix" evidence="21">
    <location>
        <begin position="1007"/>
        <end position="1013"/>
    </location>
</feature>
<feature type="helix" evidence="21">
    <location>
        <begin position="1016"/>
        <end position="1019"/>
    </location>
</feature>
<feature type="helix" evidence="21">
    <location>
        <begin position="1025"/>
        <end position="1028"/>
    </location>
</feature>
<feature type="helix" evidence="22">
    <location>
        <begin position="1031"/>
        <end position="1035"/>
    </location>
</feature>
<feature type="strand" evidence="22">
    <location>
        <begin position="1038"/>
        <end position="1041"/>
    </location>
</feature>
<feature type="helix" evidence="21">
    <location>
        <begin position="1048"/>
        <end position="1060"/>
    </location>
</feature>
<feature type="helix" evidence="21">
    <location>
        <begin position="1062"/>
        <end position="1064"/>
    </location>
</feature>
<feature type="helix" evidence="21">
    <location>
        <begin position="1067"/>
        <end position="1072"/>
    </location>
</feature>
<feature type="helix" evidence="21">
    <location>
        <begin position="1078"/>
        <end position="1087"/>
    </location>
</feature>
<feature type="helix" evidence="21">
    <location>
        <begin position="1091"/>
        <end position="1102"/>
    </location>
</feature>
<feature type="turn" evidence="21">
    <location>
        <begin position="1107"/>
        <end position="1109"/>
    </location>
</feature>
<feature type="helix" evidence="21">
    <location>
        <begin position="1110"/>
        <end position="1114"/>
    </location>
</feature>
<reference key="1">
    <citation type="journal article" date="1992" name="Mol. Microbiol.">
        <title>IRE1 encodes a putative protein kinase containing a membrane-spanning domain and is required for inositol phototrophy in Saccharomyces cerevisiae.</title>
        <authorList>
            <person name="Nikawa J."/>
            <person name="Yamashita S."/>
        </authorList>
    </citation>
    <scope>NUCLEOTIDE SEQUENCE [GENOMIC DNA]</scope>
</reference>
<reference key="2">
    <citation type="journal article" date="1993" name="Cell">
        <title>A transmembrane protein with a cdc2+/CDC28-related kinase activity is required for signaling from the ER to the nucleus.</title>
        <authorList>
            <person name="Mori K."/>
            <person name="Ma W."/>
            <person name="Gething M.J."/>
            <person name="Sambrook J."/>
        </authorList>
    </citation>
    <scope>NUCLEOTIDE SEQUENCE [GENOMIC DNA]</scope>
    <scope>SUBCELLULAR LOCATION</scope>
    <scope>TOPOLOGY</scope>
</reference>
<reference key="3">
    <citation type="journal article" date="1994" name="Science">
        <title>Complete nucleotide sequence of Saccharomyces cerevisiae chromosome VIII.</title>
        <authorList>
            <person name="Johnston M."/>
            <person name="Andrews S."/>
            <person name="Brinkman R."/>
            <person name="Cooper J."/>
            <person name="Ding H."/>
            <person name="Dover J."/>
            <person name="Du Z."/>
            <person name="Favello A."/>
            <person name="Fulton L."/>
            <person name="Gattung S."/>
            <person name="Geisel C."/>
            <person name="Kirsten J."/>
            <person name="Kucaba T."/>
            <person name="Hillier L.W."/>
            <person name="Jier M."/>
            <person name="Johnston L."/>
            <person name="Langston Y."/>
            <person name="Latreille P."/>
            <person name="Louis E.J."/>
            <person name="Macri C."/>
            <person name="Mardis E."/>
            <person name="Menezes S."/>
            <person name="Mouser L."/>
            <person name="Nhan M."/>
            <person name="Rifkin L."/>
            <person name="Riles L."/>
            <person name="St Peter H."/>
            <person name="Trevaskis E."/>
            <person name="Vaughan K."/>
            <person name="Vignati D."/>
            <person name="Wilcox L."/>
            <person name="Wohldman P."/>
            <person name="Waterston R."/>
            <person name="Wilson R."/>
            <person name="Vaudin M."/>
        </authorList>
    </citation>
    <scope>NUCLEOTIDE SEQUENCE [LARGE SCALE GENOMIC DNA]</scope>
    <source>
        <strain>ATCC 204508 / S288c</strain>
    </source>
</reference>
<reference key="4">
    <citation type="journal article" date="2014" name="G3 (Bethesda)">
        <title>The reference genome sequence of Saccharomyces cerevisiae: Then and now.</title>
        <authorList>
            <person name="Engel S.R."/>
            <person name="Dietrich F.S."/>
            <person name="Fisk D.G."/>
            <person name="Binkley G."/>
            <person name="Balakrishnan R."/>
            <person name="Costanzo M.C."/>
            <person name="Dwight S.S."/>
            <person name="Hitz B.C."/>
            <person name="Karra K."/>
            <person name="Nash R.S."/>
            <person name="Weng S."/>
            <person name="Wong E.D."/>
            <person name="Lloyd P."/>
            <person name="Skrzypek M.S."/>
            <person name="Miyasato S.R."/>
            <person name="Simison M."/>
            <person name="Cherry J.M."/>
        </authorList>
    </citation>
    <scope>GENOME REANNOTATION</scope>
    <source>
        <strain>ATCC 204508 / S288c</strain>
    </source>
</reference>
<reference key="5">
    <citation type="journal article" date="1996" name="J. Biol. Chem.">
        <title>The unfolded protein response pathway in Saccharomyces cerevisiae. Oligomerization and trans-phosphorylation of Ire1p (Ern1p) are required for kinase activation.</title>
        <authorList>
            <person name="Welihinda A.A."/>
            <person name="Kaufman R.J."/>
        </authorList>
    </citation>
    <scope>FUNCTION</scope>
    <scope>CATALYTIC ACTIVITY</scope>
    <scope>ACTIVITY REGULATION</scope>
    <scope>HOMODIMERIZATION</scope>
    <scope>MUTAGENESIS OF LYS-702</scope>
</reference>
<reference key="6">
    <citation type="journal article" date="1996" name="EMBO J.">
        <title>Oligomerization and phosphorylation of the Ire1p kinase during intracellular signaling from the endoplasmic reticulum to the nucleus.</title>
        <authorList>
            <person name="Shamu C.E."/>
            <person name="Walter P."/>
        </authorList>
    </citation>
    <scope>FUNCTION</scope>
    <scope>OLIGOMERIZATION</scope>
    <scope>PHOSPHORYLATION AT SER-840 AND SER-841</scope>
</reference>
<reference key="7">
    <citation type="journal article" date="1997" name="Cell">
        <title>The transmembrane kinase Ire1p is a site-specific endonuclease that initiates mRNA splicing in the unfolded protein response.</title>
        <authorList>
            <person name="Sidrauski C."/>
            <person name="Walter P."/>
        </authorList>
    </citation>
    <scope>FUNCTION</scope>
    <scope>CATALYTIC ACTIVITY</scope>
</reference>
<reference key="8">
    <citation type="journal article" date="1998" name="Mol. Cell. Biol.">
        <title>Protein serine/threonine phosphatase Ptc2p negatively regulates the unfolded-protein response by dephosphorylating Ire1p kinase.</title>
        <authorList>
            <person name="Welihinda A.A."/>
            <person name="Tirasophon W."/>
            <person name="Green S.R."/>
            <person name="Kaufman R.J."/>
        </authorList>
    </citation>
    <scope>FUNCTION</scope>
    <scope>CATALYTIC ACTIVITY</scope>
    <scope>ACTIVITY REGULATION</scope>
    <scope>INTERACTION WITH PTC2</scope>
</reference>
<reference key="9">
    <citation type="journal article" date="2003" name="Nature">
        <title>Global analysis of protein expression in yeast.</title>
        <authorList>
            <person name="Ghaemmaghami S."/>
            <person name="Huh W.-K."/>
            <person name="Bower K."/>
            <person name="Howson R.W."/>
            <person name="Belle A."/>
            <person name="Dephoure N."/>
            <person name="O'Shea E.K."/>
            <person name="Weissman J.S."/>
        </authorList>
    </citation>
    <scope>LEVEL OF PROTEIN EXPRESSION [LARGE SCALE ANALYSIS]</scope>
</reference>
<reference key="10">
    <citation type="journal article" date="2009" name="Science">
        <title>Global analysis of Cdk1 substrate phosphorylation sites provides insights into evolution.</title>
        <authorList>
            <person name="Holt L.J."/>
            <person name="Tuch B.B."/>
            <person name="Villen J."/>
            <person name="Johnson A.D."/>
            <person name="Gygi S.P."/>
            <person name="Morgan D.O."/>
        </authorList>
    </citation>
    <scope>IDENTIFICATION BY MASS SPECTROMETRY [LARGE SCALE ANALYSIS]</scope>
</reference>
<reference evidence="18" key="11">
    <citation type="journal article" date="2005" name="Proc. Natl. Acad. Sci. U.S.A.">
        <title>On the mechanism of sensing unfolded protein in the endoplasmic reticulum.</title>
        <authorList>
            <person name="Credle J.J."/>
            <person name="Finer-Moore J.S."/>
            <person name="Papa F.R."/>
            <person name="Stroud R.M."/>
            <person name="Walter P."/>
        </authorList>
    </citation>
    <scope>X-RAY CRYSTALLOGRAPHY (2.98 ANGSTROMS) OF 111-449 IN COMPLEX WITH PEPTIDE</scope>
    <scope>SUBUNIT</scope>
    <scope>MUTAGENESIS OF THR-226; MET-229; PHE-247; PHE-285; TYR-301 AND TRP-426</scope>
</reference>
<reference evidence="19" key="12">
    <citation type="journal article" date="2008" name="Cell">
        <title>Structure of the dual enzyme Ire1 reveals the basis for catalysis and regulation in nonconventional RNA splicing.</title>
        <authorList>
            <person name="Lee K.P."/>
            <person name="Dey M."/>
            <person name="Neculai D."/>
            <person name="Cao C."/>
            <person name="Dever T.E."/>
            <person name="Sicheri F."/>
        </authorList>
    </citation>
    <scope>X-RAY CRYSTALLOGRAPHY (2.40 ANGSTROMS) OF 658-1115 IN COMPLEX WITH ADP AND MG(2+)</scope>
    <scope>FUNCTION</scope>
    <scope>CATALYTIC ACTIVITY</scope>
    <scope>COFACTOR</scope>
    <scope>SUBUNIT</scope>
    <scope>PHOSPHORYLATION AT SER-840; SER-841 AND THR-844</scope>
    <scope>MUTAGENESIS OF ARG-697; ASP-723; ARG-730; ASP-797; SER-840; SER-841 AND THR-844</scope>
</reference>
<gene>
    <name type="primary">IRE1</name>
    <name type="synonym">ERN1</name>
    <name type="ordered locus">YHR079C</name>
</gene>
<protein>
    <recommendedName>
        <fullName>Serine/threonine-protein kinase/endoribonuclease IRE1</fullName>
    </recommendedName>
    <alternativeName>
        <fullName>Endoplasmic reticulum-to-nucleus signaling 1</fullName>
    </alternativeName>
    <domain>
        <recommendedName>
            <fullName>Serine/threonine-protein kinase</fullName>
            <ecNumber evidence="8 10 17">2.7.11.1</ecNumber>
        </recommendedName>
    </domain>
    <domain>
        <recommendedName>
            <fullName>Endoribonuclease</fullName>
            <ecNumber evidence="8 12">3.1.26.-</ecNumber>
        </recommendedName>
    </domain>
</protein>
<proteinExistence type="evidence at protein level"/>
<sequence length="1115" mass="126976">MRLLRRNMLVLTLLVCVFSSIISCSIPLSSRTSRRQIVEDEVASTKKLNFNYGVDKNINSPIPAPRTTEGLPNMKLSSYPTPNLLNTADNRRANKKGRRAANSISVPYLENRSLNELSLSDILIAADVEGGLHAVDRRNGHIIWSIEPENFQPLIEIQEPSRLETYETLIIEPFGDGNIYYFNAHQGLQKLPLSIRQLVSTSPLHLKTNIVVNDSGKIVEDEKVYTGSMRTIMYTINMLNGEIISAFGPGSKNGYFGSQSVDCSPEEKIKLQECENMIVIGKTIFELGIHSYDGASYNVTYSTWQQNVLDVPLALQNTFSKDGMCIAPFRDKSLLASDLDFRIARWVSPTFPGIIVGLFDVFNDLRTNENILVPHPFNPGDHESISSNKVYLDQTSNLSWFALSSQNFPSLVESAPISRYASSDRWRVSSIFEDETLFKNAIMGVHQIYNNEYDHLYENYEKTNSLDTTHKYPPLMIDSSVDTTDLHQNNEMNSLKEYMSPEDLEAYRKKIHEQISRELDEKNQNSLLLKFGSLVYRIIETGVFLLLFLIFCAILQRFKILPPLYVLLSKIGFMPEKEIPIVESKSLNCPSSSENVTKPFDMKSGKQVVFEGAVNDGSLKSEKDNDDADEDDEKSLDLTTEKKKRKRGSRGGKKGRKSRIANIPNFEQSLKNLVVSEKILGYGSSGTVVFQGSFQGRPVAVKRMLIDFCDIALMEIKLLTESDDHPNVIRYYCSETTDRFLYIALELCNLNLQDLVESKNVSDENLKLQKEYNPISLLRQIASGVAHLHSLKIIHRDLKPQNILVSTSSRFTADQQTGAENLRILISDFGLCKKLDSGQSSFRTNLNNPSGTSGWRAPELLEESNNLQCQVETEHSSSRHTVVSSDSFYDPFTKRRLTRSIDIFSMGCVFYYILSKGKHPFGDKYSRESNIIRGIFSLDEMKCLHDRSLIAEATDLISQMIDHDPLKRPTAMKVLRHPLFWPKSKKLEFLLKVSDRLEIENRDPPSALLMKFDAGSDFVIPSGDWTVKFDKTFMDNLERYRKYHSSKLMDLLRALRNKYHHFMDLPEDIAELMGPVPDGFYDYFTKRFPNLLIGVYMIVKENLSDDQILREFLYS</sequence>